<keyword id="KW-0012">Acyltransferase</keyword>
<keyword id="KW-0963">Cytoplasm</keyword>
<keyword id="KW-0275">Fatty acid biosynthesis</keyword>
<keyword id="KW-0276">Fatty acid metabolism</keyword>
<keyword id="KW-0444">Lipid biosynthesis</keyword>
<keyword id="KW-0443">Lipid metabolism</keyword>
<keyword id="KW-0511">Multifunctional enzyme</keyword>
<keyword id="KW-0808">Transferase</keyword>
<evidence type="ECO:0000255" key="1">
    <source>
        <dbReference type="HAMAP-Rule" id="MF_01815"/>
    </source>
</evidence>
<proteinExistence type="inferred from homology"/>
<sequence>MTNIGVSIIGSGSAIPKTSLDNQQLSQIVETSDEWIISRTGINKRQLVDTTESLCSLATQASLAALNQANITPKDIDLIILATSTPDDLFGTACKIQWELGAQKAVAFDITVACSGFLFALVTGAQFIRNGVYQNVLLIGADILSRWVDWEDRRTCVLFGDGAGAVLLQASESDRLLGFELGSDGSQNSCLSLSYQPQEKRIIEGVTVSQGTYQPIAMNGKEVYRFVVQKVPEAIEKALLKANIDIDKLDWLLLHQANQRILDAVANRLNIPPEKVISNLRNYGNTSAASIPLALDEVVREGLVKSGDIIAASGFGAGLSWGAVIFQWN</sequence>
<dbReference type="EC" id="2.3.1.180" evidence="1"/>
<dbReference type="EMBL" id="CP000393">
    <property type="protein sequence ID" value="ABG51074.1"/>
    <property type="molecule type" value="Genomic_DNA"/>
</dbReference>
<dbReference type="RefSeq" id="WP_011611449.1">
    <property type="nucleotide sequence ID" value="NC_008312.1"/>
</dbReference>
<dbReference type="SMR" id="Q114K0"/>
<dbReference type="STRING" id="203124.Tery_1817"/>
<dbReference type="KEGG" id="ter:Tery_1817"/>
<dbReference type="eggNOG" id="COG0332">
    <property type="taxonomic scope" value="Bacteria"/>
</dbReference>
<dbReference type="HOGENOM" id="CLU_039592_0_1_3"/>
<dbReference type="OrthoDB" id="9815506at2"/>
<dbReference type="UniPathway" id="UPA00094"/>
<dbReference type="GO" id="GO:0005737">
    <property type="term" value="C:cytoplasm"/>
    <property type="evidence" value="ECO:0007669"/>
    <property type="project" value="UniProtKB-SubCell"/>
</dbReference>
<dbReference type="GO" id="GO:0004315">
    <property type="term" value="F:3-oxoacyl-[acyl-carrier-protein] synthase activity"/>
    <property type="evidence" value="ECO:0007669"/>
    <property type="project" value="InterPro"/>
</dbReference>
<dbReference type="GO" id="GO:0033818">
    <property type="term" value="F:beta-ketoacyl-acyl-carrier-protein synthase III activity"/>
    <property type="evidence" value="ECO:0007669"/>
    <property type="project" value="UniProtKB-UniRule"/>
</dbReference>
<dbReference type="GO" id="GO:0006633">
    <property type="term" value="P:fatty acid biosynthetic process"/>
    <property type="evidence" value="ECO:0007669"/>
    <property type="project" value="UniProtKB-UniRule"/>
</dbReference>
<dbReference type="CDD" id="cd00830">
    <property type="entry name" value="KAS_III"/>
    <property type="match status" value="1"/>
</dbReference>
<dbReference type="FunFam" id="3.40.47.10:FF:000004">
    <property type="entry name" value="3-oxoacyl-[acyl-carrier-protein] synthase 3"/>
    <property type="match status" value="1"/>
</dbReference>
<dbReference type="Gene3D" id="3.40.47.10">
    <property type="match status" value="1"/>
</dbReference>
<dbReference type="HAMAP" id="MF_01815">
    <property type="entry name" value="FabH"/>
    <property type="match status" value="1"/>
</dbReference>
<dbReference type="InterPro" id="IPR013747">
    <property type="entry name" value="ACP_syn_III_C"/>
</dbReference>
<dbReference type="InterPro" id="IPR013751">
    <property type="entry name" value="ACP_syn_III_N"/>
</dbReference>
<dbReference type="InterPro" id="IPR004655">
    <property type="entry name" value="FabH"/>
</dbReference>
<dbReference type="InterPro" id="IPR016039">
    <property type="entry name" value="Thiolase-like"/>
</dbReference>
<dbReference type="NCBIfam" id="TIGR00747">
    <property type="entry name" value="fabH"/>
    <property type="match status" value="1"/>
</dbReference>
<dbReference type="NCBIfam" id="NF006829">
    <property type="entry name" value="PRK09352.1"/>
    <property type="match status" value="1"/>
</dbReference>
<dbReference type="PANTHER" id="PTHR43091">
    <property type="entry name" value="3-OXOACYL-[ACYL-CARRIER-PROTEIN] SYNTHASE"/>
    <property type="match status" value="1"/>
</dbReference>
<dbReference type="PANTHER" id="PTHR43091:SF1">
    <property type="entry name" value="BETA-KETOACYL-[ACYL-CARRIER-PROTEIN] SYNTHASE III, CHLOROPLASTIC"/>
    <property type="match status" value="1"/>
</dbReference>
<dbReference type="Pfam" id="PF08545">
    <property type="entry name" value="ACP_syn_III"/>
    <property type="match status" value="1"/>
</dbReference>
<dbReference type="Pfam" id="PF08541">
    <property type="entry name" value="ACP_syn_III_C"/>
    <property type="match status" value="1"/>
</dbReference>
<dbReference type="SUPFAM" id="SSF53901">
    <property type="entry name" value="Thiolase-like"/>
    <property type="match status" value="1"/>
</dbReference>
<gene>
    <name evidence="1" type="primary">fabH</name>
    <name type="ordered locus">Tery_1817</name>
</gene>
<organism>
    <name type="scientific">Trichodesmium erythraeum (strain IMS101)</name>
    <dbReference type="NCBI Taxonomy" id="203124"/>
    <lineage>
        <taxon>Bacteria</taxon>
        <taxon>Bacillati</taxon>
        <taxon>Cyanobacteriota</taxon>
        <taxon>Cyanophyceae</taxon>
        <taxon>Oscillatoriophycideae</taxon>
        <taxon>Oscillatoriales</taxon>
        <taxon>Microcoleaceae</taxon>
        <taxon>Trichodesmium</taxon>
    </lineage>
</organism>
<protein>
    <recommendedName>
        <fullName evidence="1">Beta-ketoacyl-[acyl-carrier-protein] synthase III</fullName>
        <shortName evidence="1">Beta-ketoacyl-ACP synthase III</shortName>
        <shortName evidence="1">KAS III</shortName>
        <ecNumber evidence="1">2.3.1.180</ecNumber>
    </recommendedName>
    <alternativeName>
        <fullName evidence="1">3-oxoacyl-[acyl-carrier-protein] synthase 3</fullName>
    </alternativeName>
    <alternativeName>
        <fullName evidence="1">3-oxoacyl-[acyl-carrier-protein] synthase III</fullName>
    </alternativeName>
</protein>
<accession>Q114K0</accession>
<comment type="function">
    <text evidence="1">Catalyzes the condensation reaction of fatty acid synthesis by the addition to an acyl acceptor of two carbons from malonyl-ACP. Catalyzes the first condensation reaction which initiates fatty acid synthesis and may therefore play a role in governing the total rate of fatty acid production. Possesses both acetoacetyl-ACP synthase and acetyl transacylase activities. Its substrate specificity determines the biosynthesis of branched-chain and/or straight-chain of fatty acids.</text>
</comment>
<comment type="catalytic activity">
    <reaction evidence="1">
        <text>malonyl-[ACP] + acetyl-CoA + H(+) = 3-oxobutanoyl-[ACP] + CO2 + CoA</text>
        <dbReference type="Rhea" id="RHEA:12080"/>
        <dbReference type="Rhea" id="RHEA-COMP:9623"/>
        <dbReference type="Rhea" id="RHEA-COMP:9625"/>
        <dbReference type="ChEBI" id="CHEBI:15378"/>
        <dbReference type="ChEBI" id="CHEBI:16526"/>
        <dbReference type="ChEBI" id="CHEBI:57287"/>
        <dbReference type="ChEBI" id="CHEBI:57288"/>
        <dbReference type="ChEBI" id="CHEBI:78449"/>
        <dbReference type="ChEBI" id="CHEBI:78450"/>
        <dbReference type="EC" id="2.3.1.180"/>
    </reaction>
</comment>
<comment type="pathway">
    <text evidence="1">Lipid metabolism; fatty acid biosynthesis.</text>
</comment>
<comment type="subunit">
    <text evidence="1">Homodimer.</text>
</comment>
<comment type="subcellular location">
    <subcellularLocation>
        <location evidence="1">Cytoplasm</location>
    </subcellularLocation>
</comment>
<comment type="domain">
    <text evidence="1">The last Arg residue of the ACP-binding site is essential for the weak association between ACP/AcpP and FabH.</text>
</comment>
<comment type="similarity">
    <text evidence="1">Belongs to the thiolase-like superfamily. FabH family.</text>
</comment>
<reference key="1">
    <citation type="journal article" date="2015" name="Proc. Natl. Acad. Sci. U.S.A.">
        <title>Trichodesmium genome maintains abundant, widespread noncoding DNA in situ, despite oligotrophic lifestyle.</title>
        <authorList>
            <person name="Walworth N."/>
            <person name="Pfreundt U."/>
            <person name="Nelson W.C."/>
            <person name="Mincer T."/>
            <person name="Heidelberg J.F."/>
            <person name="Fu F."/>
            <person name="Waterbury J.B."/>
            <person name="Glavina del Rio T."/>
            <person name="Goodwin L."/>
            <person name="Kyrpides N.C."/>
            <person name="Land M.L."/>
            <person name="Woyke T."/>
            <person name="Hutchins D.A."/>
            <person name="Hess W.R."/>
            <person name="Webb E.A."/>
        </authorList>
    </citation>
    <scope>NUCLEOTIDE SEQUENCE [LARGE SCALE GENOMIC DNA]</scope>
    <source>
        <strain>IMS101</strain>
    </source>
</reference>
<feature type="chain" id="PRO_1000056439" description="Beta-ketoacyl-[acyl-carrier-protein] synthase III">
    <location>
        <begin position="1"/>
        <end position="329"/>
    </location>
</feature>
<feature type="region of interest" description="ACP-binding" evidence="1">
    <location>
        <begin position="256"/>
        <end position="260"/>
    </location>
</feature>
<feature type="active site" evidence="1">
    <location>
        <position position="114"/>
    </location>
</feature>
<feature type="active site" evidence="1">
    <location>
        <position position="255"/>
    </location>
</feature>
<feature type="active site" evidence="1">
    <location>
        <position position="285"/>
    </location>
</feature>
<name>FABH_TRIEI</name>